<keyword id="KW-0396">Initiation factor</keyword>
<keyword id="KW-0648">Protein biosynthesis</keyword>
<keyword id="KW-1185">Reference proteome</keyword>
<gene>
    <name type="primary">eIF1A</name>
    <name type="ordered locus">MTH_1004</name>
</gene>
<dbReference type="EMBL" id="AE000666">
    <property type="protein sequence ID" value="AAB85500.1"/>
    <property type="molecule type" value="Genomic_DNA"/>
</dbReference>
<dbReference type="PIR" id="H69000">
    <property type="entry name" value="H69000"/>
</dbReference>
<dbReference type="RefSeq" id="WP_010876635.1">
    <property type="nucleotide sequence ID" value="NC_000916.1"/>
</dbReference>
<dbReference type="SMR" id="O27085"/>
<dbReference type="FunCoup" id="O27085">
    <property type="interactions" value="127"/>
</dbReference>
<dbReference type="STRING" id="187420.MTH_1004"/>
<dbReference type="PaxDb" id="187420-MTH_1004"/>
<dbReference type="EnsemblBacteria" id="AAB85500">
    <property type="protein sequence ID" value="AAB85500"/>
    <property type="gene ID" value="MTH_1004"/>
</dbReference>
<dbReference type="GeneID" id="82297450"/>
<dbReference type="KEGG" id="mth:MTH_1004"/>
<dbReference type="PATRIC" id="fig|187420.15.peg.987"/>
<dbReference type="HOGENOM" id="CLU_109098_1_2_2"/>
<dbReference type="InParanoid" id="O27085"/>
<dbReference type="Proteomes" id="UP000005223">
    <property type="component" value="Chromosome"/>
</dbReference>
<dbReference type="GO" id="GO:0003723">
    <property type="term" value="F:RNA binding"/>
    <property type="evidence" value="ECO:0007669"/>
    <property type="project" value="InterPro"/>
</dbReference>
<dbReference type="GO" id="GO:0003743">
    <property type="term" value="F:translation initiation factor activity"/>
    <property type="evidence" value="ECO:0007669"/>
    <property type="project" value="UniProtKB-UniRule"/>
</dbReference>
<dbReference type="CDD" id="cd05793">
    <property type="entry name" value="S1_IF1A"/>
    <property type="match status" value="1"/>
</dbReference>
<dbReference type="Gene3D" id="2.40.50.140">
    <property type="entry name" value="Nucleic acid-binding proteins"/>
    <property type="match status" value="1"/>
</dbReference>
<dbReference type="HAMAP" id="MF_00216">
    <property type="entry name" value="aIF_1A"/>
    <property type="match status" value="1"/>
</dbReference>
<dbReference type="InterPro" id="IPR012340">
    <property type="entry name" value="NA-bd_OB-fold"/>
</dbReference>
<dbReference type="InterPro" id="IPR006196">
    <property type="entry name" value="RNA-binding_domain_S1_IF1"/>
</dbReference>
<dbReference type="InterPro" id="IPR001253">
    <property type="entry name" value="TIF_eIF-1A"/>
</dbReference>
<dbReference type="InterPro" id="IPR018104">
    <property type="entry name" value="TIF_eIF-1A_CS"/>
</dbReference>
<dbReference type="NCBIfam" id="TIGR00523">
    <property type="entry name" value="eIF-1A"/>
    <property type="match status" value="1"/>
</dbReference>
<dbReference type="NCBIfam" id="NF003084">
    <property type="entry name" value="PRK04012.1-3"/>
    <property type="match status" value="1"/>
</dbReference>
<dbReference type="NCBIfam" id="NF003085">
    <property type="entry name" value="PRK04012.1-5"/>
    <property type="match status" value="1"/>
</dbReference>
<dbReference type="PANTHER" id="PTHR21668">
    <property type="entry name" value="EIF-1A"/>
    <property type="match status" value="1"/>
</dbReference>
<dbReference type="Pfam" id="PF01176">
    <property type="entry name" value="eIF-1a"/>
    <property type="match status" value="1"/>
</dbReference>
<dbReference type="SMART" id="SM00652">
    <property type="entry name" value="eIF1a"/>
    <property type="match status" value="1"/>
</dbReference>
<dbReference type="SUPFAM" id="SSF50249">
    <property type="entry name" value="Nucleic acid-binding proteins"/>
    <property type="match status" value="1"/>
</dbReference>
<dbReference type="PROSITE" id="PS01262">
    <property type="entry name" value="IF1A"/>
    <property type="match status" value="1"/>
</dbReference>
<dbReference type="PROSITE" id="PS50832">
    <property type="entry name" value="S1_IF1_TYPE"/>
    <property type="match status" value="1"/>
</dbReference>
<protein>
    <recommendedName>
        <fullName>Translation initiation factor 1A</fullName>
        <shortName>aIF-1A</shortName>
    </recommendedName>
</protein>
<sequence>MSRGHQTQEVRRVRTPRRGEIPGVVEQIMGHGKLKVRCADGHIRLGRIPGKMKKRIWIREGDVVLVKPWEFQSEEKADIVWRYTRTESNWLERKGYLKL</sequence>
<accession>O27085</accession>
<name>IF1A_METTH</name>
<organism>
    <name type="scientific">Methanothermobacter thermautotrophicus (strain ATCC 29096 / DSM 1053 / JCM 10044 / NBRC 100330 / Delta H)</name>
    <name type="common">Methanobacterium thermoautotrophicum</name>
    <dbReference type="NCBI Taxonomy" id="187420"/>
    <lineage>
        <taxon>Archaea</taxon>
        <taxon>Methanobacteriati</taxon>
        <taxon>Methanobacteriota</taxon>
        <taxon>Methanomada group</taxon>
        <taxon>Methanobacteria</taxon>
        <taxon>Methanobacteriales</taxon>
        <taxon>Methanobacteriaceae</taxon>
        <taxon>Methanothermobacter</taxon>
    </lineage>
</organism>
<feature type="chain" id="PRO_0000145126" description="Translation initiation factor 1A">
    <location>
        <begin position="1"/>
        <end position="99"/>
    </location>
</feature>
<feature type="domain" description="S1-like">
    <location>
        <begin position="11"/>
        <end position="84"/>
    </location>
</feature>
<reference key="1">
    <citation type="journal article" date="1997" name="J. Bacteriol.">
        <title>Complete genome sequence of Methanobacterium thermoautotrophicum deltaH: functional analysis and comparative genomics.</title>
        <authorList>
            <person name="Smith D.R."/>
            <person name="Doucette-Stamm L.A."/>
            <person name="Deloughery C."/>
            <person name="Lee H.-M."/>
            <person name="Dubois J."/>
            <person name="Aldredge T."/>
            <person name="Bashirzadeh R."/>
            <person name="Blakely D."/>
            <person name="Cook R."/>
            <person name="Gilbert K."/>
            <person name="Harrison D."/>
            <person name="Hoang L."/>
            <person name="Keagle P."/>
            <person name="Lumm W."/>
            <person name="Pothier B."/>
            <person name="Qiu D."/>
            <person name="Spadafora R."/>
            <person name="Vicare R."/>
            <person name="Wang Y."/>
            <person name="Wierzbowski J."/>
            <person name="Gibson R."/>
            <person name="Jiwani N."/>
            <person name="Caruso A."/>
            <person name="Bush D."/>
            <person name="Safer H."/>
            <person name="Patwell D."/>
            <person name="Prabhakar S."/>
            <person name="McDougall S."/>
            <person name="Shimer G."/>
            <person name="Goyal A."/>
            <person name="Pietrovski S."/>
            <person name="Church G.M."/>
            <person name="Daniels C.J."/>
            <person name="Mao J.-I."/>
            <person name="Rice P."/>
            <person name="Noelling J."/>
            <person name="Reeve J.N."/>
        </authorList>
    </citation>
    <scope>NUCLEOTIDE SEQUENCE [LARGE SCALE GENOMIC DNA]</scope>
    <source>
        <strain>ATCC 29096 / DSM 1053 / JCM 10044 / NBRC 100330 / Delta H</strain>
    </source>
</reference>
<proteinExistence type="inferred from homology"/>
<comment type="function">
    <text evidence="1">Seems to be required for maximal rate of protein biosynthesis. Enhances ribosome dissociation into subunits and stabilizes the binding of the initiator Met-tRNA(I) to 40 S ribosomal subunits (By similarity).</text>
</comment>
<comment type="similarity">
    <text evidence="2">Belongs to the eIF-1A family.</text>
</comment>
<evidence type="ECO:0000250" key="1"/>
<evidence type="ECO:0000305" key="2"/>